<organism>
    <name type="scientific">Oryza sativa subsp. japonica</name>
    <name type="common">Rice</name>
    <dbReference type="NCBI Taxonomy" id="39947"/>
    <lineage>
        <taxon>Eukaryota</taxon>
        <taxon>Viridiplantae</taxon>
        <taxon>Streptophyta</taxon>
        <taxon>Embryophyta</taxon>
        <taxon>Tracheophyta</taxon>
        <taxon>Spermatophyta</taxon>
        <taxon>Magnoliopsida</taxon>
        <taxon>Liliopsida</taxon>
        <taxon>Poales</taxon>
        <taxon>Poaceae</taxon>
        <taxon>BOP clade</taxon>
        <taxon>Oryzoideae</taxon>
        <taxon>Oryzeae</taxon>
        <taxon>Oryzinae</taxon>
        <taxon>Oryza</taxon>
        <taxon>Oryza sativa</taxon>
    </lineage>
</organism>
<name>WOX9_ORYSJ</name>
<reference key="1">
    <citation type="journal article" date="2002" name="Nature">
        <title>The genome sequence and structure of rice chromosome 1.</title>
        <authorList>
            <person name="Sasaki T."/>
            <person name="Matsumoto T."/>
            <person name="Yamamoto K."/>
            <person name="Sakata K."/>
            <person name="Baba T."/>
            <person name="Katayose Y."/>
            <person name="Wu J."/>
            <person name="Niimura Y."/>
            <person name="Cheng Z."/>
            <person name="Nagamura Y."/>
            <person name="Antonio B.A."/>
            <person name="Kanamori H."/>
            <person name="Hosokawa S."/>
            <person name="Masukawa M."/>
            <person name="Arikawa K."/>
            <person name="Chiden Y."/>
            <person name="Hayashi M."/>
            <person name="Okamoto M."/>
            <person name="Ando T."/>
            <person name="Aoki H."/>
            <person name="Arita K."/>
            <person name="Hamada M."/>
            <person name="Harada C."/>
            <person name="Hijishita S."/>
            <person name="Honda M."/>
            <person name="Ichikawa Y."/>
            <person name="Idonuma A."/>
            <person name="Iijima M."/>
            <person name="Ikeda M."/>
            <person name="Ikeno M."/>
            <person name="Ito S."/>
            <person name="Ito T."/>
            <person name="Ito Y."/>
            <person name="Ito Y."/>
            <person name="Iwabuchi A."/>
            <person name="Kamiya K."/>
            <person name="Karasawa W."/>
            <person name="Katagiri S."/>
            <person name="Kikuta A."/>
            <person name="Kobayashi N."/>
            <person name="Kono I."/>
            <person name="Machita K."/>
            <person name="Maehara T."/>
            <person name="Mizuno H."/>
            <person name="Mizubayashi T."/>
            <person name="Mukai Y."/>
            <person name="Nagasaki H."/>
            <person name="Nakashima M."/>
            <person name="Nakama Y."/>
            <person name="Nakamichi Y."/>
            <person name="Nakamura M."/>
            <person name="Namiki N."/>
            <person name="Negishi M."/>
            <person name="Ohta I."/>
            <person name="Ono N."/>
            <person name="Saji S."/>
            <person name="Sakai K."/>
            <person name="Shibata M."/>
            <person name="Shimokawa T."/>
            <person name="Shomura A."/>
            <person name="Song J."/>
            <person name="Takazaki Y."/>
            <person name="Terasawa K."/>
            <person name="Tsuji K."/>
            <person name="Waki K."/>
            <person name="Yamagata H."/>
            <person name="Yamane H."/>
            <person name="Yoshiki S."/>
            <person name="Yoshihara R."/>
            <person name="Yukawa K."/>
            <person name="Zhong H."/>
            <person name="Iwama H."/>
            <person name="Endo T."/>
            <person name="Ito H."/>
            <person name="Hahn J.H."/>
            <person name="Kim H.-I."/>
            <person name="Eun M.-Y."/>
            <person name="Yano M."/>
            <person name="Jiang J."/>
            <person name="Gojobori T."/>
        </authorList>
    </citation>
    <scope>NUCLEOTIDE SEQUENCE [LARGE SCALE GENOMIC DNA]</scope>
    <source>
        <strain>cv. Nipponbare</strain>
    </source>
</reference>
<reference key="2">
    <citation type="journal article" date="2005" name="Nature">
        <title>The map-based sequence of the rice genome.</title>
        <authorList>
            <consortium name="International rice genome sequencing project (IRGSP)"/>
        </authorList>
    </citation>
    <scope>NUCLEOTIDE SEQUENCE [LARGE SCALE GENOMIC DNA]</scope>
    <source>
        <strain>cv. Nipponbare</strain>
    </source>
</reference>
<reference key="3">
    <citation type="journal article" date="2008" name="Nucleic Acids Res.">
        <title>The rice annotation project database (RAP-DB): 2008 update.</title>
        <authorList>
            <consortium name="The rice annotation project (RAP)"/>
        </authorList>
    </citation>
    <scope>GENOME REANNOTATION</scope>
    <source>
        <strain>cv. Nipponbare</strain>
    </source>
</reference>
<reference key="4">
    <citation type="journal article" date="2013" name="Rice">
        <title>Improvement of the Oryza sativa Nipponbare reference genome using next generation sequence and optical map data.</title>
        <authorList>
            <person name="Kawahara Y."/>
            <person name="de la Bastide M."/>
            <person name="Hamilton J.P."/>
            <person name="Kanamori H."/>
            <person name="McCombie W.R."/>
            <person name="Ouyang S."/>
            <person name="Schwartz D.C."/>
            <person name="Tanaka T."/>
            <person name="Wu J."/>
            <person name="Zhou S."/>
            <person name="Childs K.L."/>
            <person name="Davidson R.M."/>
            <person name="Lin H."/>
            <person name="Quesada-Ocampo L."/>
            <person name="Vaillancourt B."/>
            <person name="Sakai H."/>
            <person name="Lee S.S."/>
            <person name="Kim J."/>
            <person name="Numa H."/>
            <person name="Itoh T."/>
            <person name="Buell C.R."/>
            <person name="Matsumoto T."/>
        </authorList>
    </citation>
    <scope>GENOME REANNOTATION</scope>
    <source>
        <strain>cv. Nipponbare</strain>
    </source>
</reference>
<reference key="5">
    <citation type="journal article" date="2005" name="PLoS Biol.">
        <title>The genomes of Oryza sativa: a history of duplications.</title>
        <authorList>
            <person name="Yu J."/>
            <person name="Wang J."/>
            <person name="Lin W."/>
            <person name="Li S."/>
            <person name="Li H."/>
            <person name="Zhou J."/>
            <person name="Ni P."/>
            <person name="Dong W."/>
            <person name="Hu S."/>
            <person name="Zeng C."/>
            <person name="Zhang J."/>
            <person name="Zhang Y."/>
            <person name="Li R."/>
            <person name="Xu Z."/>
            <person name="Li S."/>
            <person name="Li X."/>
            <person name="Zheng H."/>
            <person name="Cong L."/>
            <person name="Lin L."/>
            <person name="Yin J."/>
            <person name="Geng J."/>
            <person name="Li G."/>
            <person name="Shi J."/>
            <person name="Liu J."/>
            <person name="Lv H."/>
            <person name="Li J."/>
            <person name="Wang J."/>
            <person name="Deng Y."/>
            <person name="Ran L."/>
            <person name="Shi X."/>
            <person name="Wang X."/>
            <person name="Wu Q."/>
            <person name="Li C."/>
            <person name="Ren X."/>
            <person name="Wang J."/>
            <person name="Wang X."/>
            <person name="Li D."/>
            <person name="Liu D."/>
            <person name="Zhang X."/>
            <person name="Ji Z."/>
            <person name="Zhao W."/>
            <person name="Sun Y."/>
            <person name="Zhang Z."/>
            <person name="Bao J."/>
            <person name="Han Y."/>
            <person name="Dong L."/>
            <person name="Ji J."/>
            <person name="Chen P."/>
            <person name="Wu S."/>
            <person name="Liu J."/>
            <person name="Xiao Y."/>
            <person name="Bu D."/>
            <person name="Tan J."/>
            <person name="Yang L."/>
            <person name="Ye C."/>
            <person name="Zhang J."/>
            <person name="Xu J."/>
            <person name="Zhou Y."/>
            <person name="Yu Y."/>
            <person name="Zhang B."/>
            <person name="Zhuang S."/>
            <person name="Wei H."/>
            <person name="Liu B."/>
            <person name="Lei M."/>
            <person name="Yu H."/>
            <person name="Li Y."/>
            <person name="Xu H."/>
            <person name="Wei S."/>
            <person name="He X."/>
            <person name="Fang L."/>
            <person name="Zhang Z."/>
            <person name="Zhang Y."/>
            <person name="Huang X."/>
            <person name="Su Z."/>
            <person name="Tong W."/>
            <person name="Li J."/>
            <person name="Tong Z."/>
            <person name="Li S."/>
            <person name="Ye J."/>
            <person name="Wang L."/>
            <person name="Fang L."/>
            <person name="Lei T."/>
            <person name="Chen C.-S."/>
            <person name="Chen H.-C."/>
            <person name="Xu Z."/>
            <person name="Li H."/>
            <person name="Huang H."/>
            <person name="Zhang F."/>
            <person name="Xu H."/>
            <person name="Li N."/>
            <person name="Zhao C."/>
            <person name="Li S."/>
            <person name="Dong L."/>
            <person name="Huang Y."/>
            <person name="Li L."/>
            <person name="Xi Y."/>
            <person name="Qi Q."/>
            <person name="Li W."/>
            <person name="Zhang B."/>
            <person name="Hu W."/>
            <person name="Zhang Y."/>
            <person name="Tian X."/>
            <person name="Jiao Y."/>
            <person name="Liang X."/>
            <person name="Jin J."/>
            <person name="Gao L."/>
            <person name="Zheng W."/>
            <person name="Hao B."/>
            <person name="Liu S.-M."/>
            <person name="Wang W."/>
            <person name="Yuan L."/>
            <person name="Cao M."/>
            <person name="McDermott J."/>
            <person name="Samudrala R."/>
            <person name="Wang J."/>
            <person name="Wong G.K.-S."/>
            <person name="Yang H."/>
        </authorList>
    </citation>
    <scope>NUCLEOTIDE SEQUENCE [LARGE SCALE GENOMIC DNA]</scope>
    <source>
        <strain>cv. Nipponbare</strain>
    </source>
</reference>
<reference key="6">
    <citation type="journal article" date="2003" name="Science">
        <title>Collection, mapping, and annotation of over 28,000 cDNA clones from japonica rice.</title>
        <authorList>
            <consortium name="The rice full-length cDNA consortium"/>
        </authorList>
    </citation>
    <scope>NUCLEOTIDE SEQUENCE [LARGE SCALE MRNA]</scope>
    <source>
        <strain>cv. Nipponbare</strain>
    </source>
</reference>
<reference key="7">
    <citation type="journal article" date="2006" name="Mol. Biol. Evol.">
        <title>The shoot stem cell niche in angiosperms: expression patterns of WUS orthologues in rice and maize imply major modifications in the course of mono- and dicot evolution.</title>
        <authorList>
            <person name="Nardmann J."/>
            <person name="Werr W."/>
        </authorList>
    </citation>
    <scope>NUCLEOTIDE SEQUENCE [MRNA] OF 10-74</scope>
</reference>
<reference key="8">
    <citation type="journal article" date="2003" name="Plant J.">
        <title>Isolation and characterization of a rice WUSCHEL-type homeobox gene that is specifically expressed in the central cells of a quiescent center in the root apical meristem.</title>
        <authorList>
            <person name="Kamiya N."/>
            <person name="Nagasaki H."/>
            <person name="Morikami A."/>
            <person name="Sato Y."/>
            <person name="Matsuoka M."/>
        </authorList>
    </citation>
    <scope>FUNCTION</scope>
    <scope>TISSUE SPECIFICITY</scope>
    <scope>DEVELOPMENTAL STAGE</scope>
</reference>
<reference key="9">
    <citation type="journal article" date="2007" name="Plant Physiol.">
        <title>A WUSCHEL-LIKE HOMEOBOX gene represses a YABBY gene expression required for rice leaf development.</title>
        <authorList>
            <person name="Dai M."/>
            <person name="Hu Y."/>
            <person name="Zhao Y."/>
            <person name="Liu H."/>
            <person name="Zhou D.-X."/>
        </authorList>
    </citation>
    <scope>NOMENCLATURE</scope>
</reference>
<gene>
    <name type="primary">WOX9</name>
    <name type="synonym">QHB</name>
    <name type="synonym">WOX5</name>
    <name type="ordered locus">Os01g0854500</name>
    <name type="ordered locus">LOC_Os01g63510</name>
    <name type="ORF">B1096A10.8</name>
    <name type="ORF">OsJ_004011</name>
    <name type="ORF">P0529E05.42</name>
</gene>
<sequence length="200" mass="22821">MEALSGRVGVKCGRWNPTAEQVKVLTELFRAGLRTPSTEQIQRISTHLSAFGKVESKNVFYWFQNHKARERHHHKKRRRGASSPDSGSNDDDGRAAAHEGDADLVLQPPESKREARSYGHHHRLMTCYVRDVVETEAMWERPTREVETLELFPLKSYDLEVDKVRYVRGGGGEQCREISFFDVAAGRDPPLELRLCSFGL</sequence>
<accession>Q8W0F1</accession>
<accession>A0A0P0VAH0</accession>
<accession>A0AAT2</accession>
<accession>B7ESU4</accession>
<accession>B9EUR4</accession>
<accession>Q0JHM7</accession>
<comment type="function">
    <text evidence="3">Transcription factor which may be involved in the specification and maintenance of the stem cells (QC cells) in the root apical meristem (RAM).</text>
</comment>
<comment type="subcellular location">
    <subcellularLocation>
        <location evidence="1">Nucleus</location>
    </subcellularLocation>
</comment>
<comment type="tissue specificity">
    <text evidence="3">Specifically expressed in the central cells of the quiescent center (QC) of the root.</text>
</comment>
<comment type="developmental stage">
    <text evidence="3">During embryogenesis and crown root formation, it is expressed prior to the morphological differentiation of the root.</text>
</comment>
<comment type="similarity">
    <text evidence="4">Belongs to the WUS homeobox family.</text>
</comment>
<comment type="sequence caution" evidence="4">
    <conflict type="erroneous gene model prediction">
        <sequence resource="EMBL-CDS" id="EEE55690"/>
    </conflict>
</comment>
<dbReference type="EMBL" id="AP003279">
    <property type="protein sequence ID" value="BAB84412.1"/>
    <property type="molecule type" value="Genomic_DNA"/>
</dbReference>
<dbReference type="EMBL" id="AP003442">
    <property type="protein sequence ID" value="BAD82456.1"/>
    <property type="molecule type" value="Genomic_DNA"/>
</dbReference>
<dbReference type="EMBL" id="AP008207">
    <property type="protein sequence ID" value="BAF06751.1"/>
    <property type="molecule type" value="Genomic_DNA"/>
</dbReference>
<dbReference type="EMBL" id="AP014957">
    <property type="protein sequence ID" value="BAS75279.1"/>
    <property type="molecule type" value="Genomic_DNA"/>
</dbReference>
<dbReference type="EMBL" id="CM000138">
    <property type="protein sequence ID" value="EEE55690.1"/>
    <property type="status" value="ALT_SEQ"/>
    <property type="molecule type" value="Genomic_DNA"/>
</dbReference>
<dbReference type="EMBL" id="AK102203">
    <property type="protein sequence ID" value="BAG95441.1"/>
    <property type="molecule type" value="mRNA"/>
</dbReference>
<dbReference type="EMBL" id="AM234751">
    <property type="protein sequence ID" value="CAJ84143.1"/>
    <property type="molecule type" value="mRNA"/>
</dbReference>
<dbReference type="RefSeq" id="XP_015642985.1">
    <property type="nucleotide sequence ID" value="XM_015787499.1"/>
</dbReference>
<dbReference type="SMR" id="Q8W0F1"/>
<dbReference type="FunCoup" id="Q8W0F1">
    <property type="interactions" value="1503"/>
</dbReference>
<dbReference type="STRING" id="39947.Q8W0F1"/>
<dbReference type="PaxDb" id="39947-Q8W0F1"/>
<dbReference type="EnsemblPlants" id="Os01t0854500-01">
    <property type="protein sequence ID" value="Os01t0854500-01"/>
    <property type="gene ID" value="Os01g0854500"/>
</dbReference>
<dbReference type="Gramene" id="Os01t0854500-01">
    <property type="protein sequence ID" value="Os01t0854500-01"/>
    <property type="gene ID" value="Os01g0854500"/>
</dbReference>
<dbReference type="KEGG" id="dosa:Os01g0854500"/>
<dbReference type="eggNOG" id="ENOG502RYVY">
    <property type="taxonomic scope" value="Eukaryota"/>
</dbReference>
<dbReference type="HOGENOM" id="CLU_070454_2_0_1"/>
<dbReference type="InParanoid" id="Q8W0F1"/>
<dbReference type="OMA" id="EVVMWER"/>
<dbReference type="OrthoDB" id="1845355at2759"/>
<dbReference type="Proteomes" id="UP000000763">
    <property type="component" value="Chromosome 1"/>
</dbReference>
<dbReference type="Proteomes" id="UP000007752">
    <property type="component" value="Chromosome 1"/>
</dbReference>
<dbReference type="Proteomes" id="UP000059680">
    <property type="component" value="Chromosome 1"/>
</dbReference>
<dbReference type="GO" id="GO:0005634">
    <property type="term" value="C:nucleus"/>
    <property type="evidence" value="ECO:0007669"/>
    <property type="project" value="UniProtKB-SubCell"/>
</dbReference>
<dbReference type="GO" id="GO:0003677">
    <property type="term" value="F:DNA binding"/>
    <property type="evidence" value="ECO:0007669"/>
    <property type="project" value="UniProtKB-KW"/>
</dbReference>
<dbReference type="GO" id="GO:0003700">
    <property type="term" value="F:DNA-binding transcription factor activity"/>
    <property type="evidence" value="ECO:0007669"/>
    <property type="project" value="InterPro"/>
</dbReference>
<dbReference type="GO" id="GO:0099402">
    <property type="term" value="P:plant organ development"/>
    <property type="evidence" value="ECO:0007669"/>
    <property type="project" value="InterPro"/>
</dbReference>
<dbReference type="CDD" id="cd00086">
    <property type="entry name" value="homeodomain"/>
    <property type="match status" value="1"/>
</dbReference>
<dbReference type="Gene3D" id="1.10.10.60">
    <property type="entry name" value="Homeodomain-like"/>
    <property type="match status" value="1"/>
</dbReference>
<dbReference type="InterPro" id="IPR001356">
    <property type="entry name" value="HD"/>
</dbReference>
<dbReference type="InterPro" id="IPR009057">
    <property type="entry name" value="Homeodomain-like_sf"/>
</dbReference>
<dbReference type="InterPro" id="IPR044555">
    <property type="entry name" value="WUSCHEL-like"/>
</dbReference>
<dbReference type="PANTHER" id="PTHR45940">
    <property type="entry name" value="WUSCHEL-RELATED HOMEOBOX 1-RELATED"/>
    <property type="match status" value="1"/>
</dbReference>
<dbReference type="PANTHER" id="PTHR45940:SF3">
    <property type="entry name" value="WUSCHEL-RELATED HOMEOBOX 7"/>
    <property type="match status" value="1"/>
</dbReference>
<dbReference type="Pfam" id="PF00046">
    <property type="entry name" value="Homeodomain"/>
    <property type="match status" value="1"/>
</dbReference>
<dbReference type="SMART" id="SM00389">
    <property type="entry name" value="HOX"/>
    <property type="match status" value="1"/>
</dbReference>
<dbReference type="SUPFAM" id="SSF46689">
    <property type="entry name" value="Homeodomain-like"/>
    <property type="match status" value="1"/>
</dbReference>
<dbReference type="PROSITE" id="PS50071">
    <property type="entry name" value="HOMEOBOX_2"/>
    <property type="match status" value="1"/>
</dbReference>
<keyword id="KW-0217">Developmental protein</keyword>
<keyword id="KW-0238">DNA-binding</keyword>
<keyword id="KW-0371">Homeobox</keyword>
<keyword id="KW-0539">Nucleus</keyword>
<keyword id="KW-1185">Reference proteome</keyword>
<keyword id="KW-0804">Transcription</keyword>
<keyword id="KW-0805">Transcription regulation</keyword>
<feature type="chain" id="PRO_0000049372" description="WUSCHEL-related homeobox 9">
    <location>
        <begin position="1"/>
        <end position="200"/>
    </location>
</feature>
<feature type="DNA-binding region" description="Homeobox; WUS-type" evidence="1">
    <location>
        <begin position="10"/>
        <end position="74"/>
    </location>
</feature>
<feature type="region of interest" description="Disordered" evidence="2">
    <location>
        <begin position="70"/>
        <end position="118"/>
    </location>
</feature>
<feature type="compositionally biased region" description="Basic residues" evidence="2">
    <location>
        <begin position="70"/>
        <end position="80"/>
    </location>
</feature>
<feature type="compositionally biased region" description="Basic and acidic residues" evidence="2">
    <location>
        <begin position="91"/>
        <end position="101"/>
    </location>
</feature>
<proteinExistence type="evidence at transcript level"/>
<evidence type="ECO:0000255" key="1">
    <source>
        <dbReference type="PROSITE-ProRule" id="PRU00108"/>
    </source>
</evidence>
<evidence type="ECO:0000256" key="2">
    <source>
        <dbReference type="SAM" id="MobiDB-lite"/>
    </source>
</evidence>
<evidence type="ECO:0000269" key="3">
    <source>
    </source>
</evidence>
<evidence type="ECO:0000305" key="4"/>
<protein>
    <recommendedName>
        <fullName>WUSCHEL-related homeobox 9</fullName>
    </recommendedName>
    <alternativeName>
        <fullName>OsWOX9</fullName>
    </alternativeName>
    <alternativeName>
        <fullName>Protein WOX5</fullName>
    </alternativeName>
    <alternativeName>
        <fullName>Quiescent-specific homeobox protein</fullName>
    </alternativeName>
</protein>